<reference key="1">
    <citation type="journal article" date="1990" name="Mol. Cell. Biol.">
        <title>Structure, hormonal regulation, and identification of the interleukin-6- and dexamethasone-responsive element of the rat haptoglobin gene.</title>
        <authorList>
            <person name="Marinkovic S."/>
            <person name="Baumann H."/>
        </authorList>
    </citation>
    <scope>NUCLEOTIDE SEQUENCE [GENOMIC DNA]</scope>
</reference>
<reference key="2">
    <citation type="submission" date="2003-06" db="EMBL/GenBank/DDBJ databases">
        <title>Liver regeneration after PH.</title>
        <authorList>
            <person name="Xu C.S."/>
            <person name="Li W.Q."/>
            <person name="Li Y.C."/>
            <person name="Ma H."/>
            <person name="Wang L."/>
            <person name="Wang S.F."/>
            <person name="Han H.P."/>
            <person name="Wang G.P."/>
            <person name="Chai L.Q."/>
            <person name="Yuan J.Y."/>
            <person name="Yang K.J."/>
            <person name="Yan H.M."/>
            <person name="Chang C.F."/>
            <person name="Zhao L.F."/>
            <person name="Shi J.B."/>
            <person name="Rahman S."/>
            <person name="Wang Q.N."/>
            <person name="Zhang J.B."/>
        </authorList>
    </citation>
    <scope>NUCLEOTIDE SEQUENCE [LARGE SCALE MRNA] (ISOFORM 2)</scope>
</reference>
<reference key="3">
    <citation type="journal article" date="2004" name="Genome Res.">
        <title>The status, quality, and expansion of the NIH full-length cDNA project: the Mammalian Gene Collection (MGC).</title>
        <authorList>
            <consortium name="The MGC Project Team"/>
        </authorList>
    </citation>
    <scope>NUCLEOTIDE SEQUENCE [LARGE SCALE MRNA] (ISOFORM 1)</scope>
    <source>
        <tissue>Liver</tissue>
    </source>
</reference>
<reference key="4">
    <citation type="journal article" date="1984" name="J. Biol. Chem.">
        <title>Nucleotide sequence of rat haptoglobin cDNA. Characterization of the alpha beta-subunit junction region of prohaptoglobin.</title>
        <authorList>
            <person name="Goldstein L.A."/>
            <person name="Heath E.C."/>
        </authorList>
    </citation>
    <scope>NUCLEOTIDE SEQUENCE [MRNA] OF 76-347 (ISOFORM 1)</scope>
</reference>
<reference key="5">
    <citation type="journal article" date="1983" name="J. Biol. Chem.">
        <title>Biosynthesis and processing of rat haptoglobin.</title>
        <authorList>
            <person name="Hanley J.M."/>
            <person name="Haugen T.H."/>
            <person name="Heath E.C."/>
        </authorList>
    </citation>
    <scope>PROTEIN SEQUENCE OF 19-43 AND 103-127</scope>
</reference>
<reference key="6">
    <citation type="journal article" date="1976" name="Comp. Biochem. Physiol.">
        <title>Comparative sequence analysis of the N-terminal region of rat, rabbit, and dog haptoglobin beta-chains.</title>
        <authorList>
            <person name="Kurosky A."/>
            <person name="Kim H.H."/>
            <person name="Touchstone B."/>
        </authorList>
    </citation>
    <scope>PROTEIN SEQUENCE OF 103-142</scope>
</reference>
<reference key="7">
    <citation type="submission" date="2006-12" db="UniProtKB">
        <authorList>
            <person name="Lubec G."/>
            <person name="Afjehi-Sadat L."/>
        </authorList>
    </citation>
    <scope>PROTEIN SEQUENCE OF 321-332</scope>
    <scope>IDENTIFICATION BY MASS SPECTROMETRY</scope>
    <source>
        <strain>Sprague-Dawley</strain>
        <tissue>Spinal cord</tissue>
    </source>
</reference>
<comment type="function">
    <text evidence="1">As a result of hemolysis, hemoglobin is found to accumulate in the kidney and is secreted in the urine. Haptoglobin captures, and combines with free plasma hemoglobin to allow hepatic recycling of heme iron and to prevent kidney damage. Haptoglobin also acts as an antioxidant, has antibacterial activity and plays a role in modulating many aspects of the acute phase response. Hemoglobin/haptoglobin complexes are rapidly cleared by the macrophage CD163 scavenger receptor expressed on the surface of liver Kupfer cells through an endocytic lysosomal degradation pathway (By similarity).</text>
</comment>
<comment type="subunit">
    <text evidence="2 3">Tetramer of two alpha and two beta chains; disulfide-linked (By similarity). The hemoglobin/haptoglobin complex is composed of a haptoglobin dimer bound to two hemoglobin alpha-beta dimers (By similarity). Interacts with CD163 (By similarity). Interacts with ERGIC3 (By similarity).</text>
</comment>
<comment type="subcellular location">
    <subcellularLocation>
        <location>Secreted</location>
    </subcellularLocation>
</comment>
<comment type="alternative products">
    <event type="alternative splicing"/>
    <isoform>
        <id>P06866-1</id>
        <name>1</name>
        <sequence type="displayed"/>
    </isoform>
    <isoform>
        <id>P06866-2</id>
        <name>2</name>
        <sequence type="described" ref="VSP_022571"/>
    </isoform>
</comment>
<comment type="tissue specificity">
    <text>Expressed by the liver and secreted in plasma.</text>
</comment>
<comment type="domain">
    <text evidence="1">The beta chain mediates most of the interactions with both subunits of hemoglobin, while the alpha chain forms the homodimeric interface.</text>
</comment>
<comment type="similarity">
    <text evidence="5">Belongs to the peptidase S1 family.</text>
</comment>
<comment type="caution">
    <text evidence="8">Although homologous to serine proteases, it has lost all essential catalytic residues and has no enzymatic activity.</text>
</comment>
<gene>
    <name type="primary">Hp</name>
    <name type="ORF">Ba1-647</name>
</gene>
<sequence length="347" mass="38563">MRALGAVVTLLLWGQLFAVELGNDATDIEDDSCPKPPEIANGYVEHLVRYRCRQFYKLQTEGDGIYTLNSEKQWVNPAAGDKLPKCEAVCGKPKHPVDQVQRIIGGSMDAKGSFPWQAKMISRHGLTTGATLISDQWLLTTAQNLFLNHSENATAKDIAPTLTLYVGKNQLVEIEKVVLHPERSVVDIGLIKLKQKVLVTEKVMPICLPSKDYVAPGRMGYVSGWGRNVNFRFTERLKYVMLPVADQEKCELHYEKSTVPEKKGAVSPVGVQPILNKHTFCAGLTKYEEDTCYGDAGSAFAVHDTEEDTWYAAGILSFDKSCAVAEYGVYVRATDLKDWVQETMAKN</sequence>
<dbReference type="EMBL" id="M34232">
    <property type="protein sequence ID" value="AAA41348.1"/>
    <property type="status" value="ALT_SEQ"/>
    <property type="molecule type" value="Genomic_DNA"/>
</dbReference>
<dbReference type="EMBL" id="M34230">
    <property type="protein sequence ID" value="AAA41348.1"/>
    <property type="status" value="JOINED"/>
    <property type="molecule type" value="Genomic_DNA"/>
</dbReference>
<dbReference type="EMBL" id="M34231">
    <property type="protein sequence ID" value="AAA41348.1"/>
    <property type="status" value="JOINED"/>
    <property type="molecule type" value="Genomic_DNA"/>
</dbReference>
<dbReference type="EMBL" id="AY325231">
    <property type="protein sequence ID" value="AAP92632.1"/>
    <property type="molecule type" value="mRNA"/>
</dbReference>
<dbReference type="EMBL" id="BC089816">
    <property type="protein sequence ID" value="AAH89816.1"/>
    <property type="molecule type" value="mRNA"/>
</dbReference>
<dbReference type="EMBL" id="K01933">
    <property type="protein sequence ID" value="AAA41349.1"/>
    <property type="molecule type" value="mRNA"/>
</dbReference>
<dbReference type="PIR" id="A34784">
    <property type="entry name" value="HPRT"/>
</dbReference>
<dbReference type="RefSeq" id="NP_036714.2">
    <molecule id="P06866-1"/>
    <property type="nucleotide sequence ID" value="NM_012582.2"/>
</dbReference>
<dbReference type="SMR" id="P06866"/>
<dbReference type="FunCoup" id="P06866">
    <property type="interactions" value="247"/>
</dbReference>
<dbReference type="IntAct" id="P06866">
    <property type="interactions" value="6"/>
</dbReference>
<dbReference type="STRING" id="10116.ENSRNOP00000020196"/>
<dbReference type="MEROPS" id="S01.972"/>
<dbReference type="GlyCosmos" id="P06866">
    <property type="glycosylation" value="2 sites, No reported glycans"/>
</dbReference>
<dbReference type="GlyGen" id="P06866">
    <property type="glycosylation" value="2 sites"/>
</dbReference>
<dbReference type="iPTMnet" id="P06866"/>
<dbReference type="PhosphoSitePlus" id="P06866"/>
<dbReference type="jPOST" id="P06866"/>
<dbReference type="PaxDb" id="10116-ENSRNOP00000049003"/>
<dbReference type="Ensembl" id="ENSRNOT00000118054.1">
    <molecule id="P06866-1"/>
    <property type="protein sequence ID" value="ENSRNOP00000085960.1"/>
    <property type="gene ID" value="ENSRNOG00000014964.9"/>
</dbReference>
<dbReference type="GeneID" id="24464"/>
<dbReference type="KEGG" id="rno:24464"/>
<dbReference type="UCSC" id="RGD:2825">
    <molecule id="P06866-1"/>
    <property type="organism name" value="rat"/>
</dbReference>
<dbReference type="AGR" id="RGD:2825"/>
<dbReference type="CTD" id="3240"/>
<dbReference type="RGD" id="2825">
    <property type="gene designation" value="Hp"/>
</dbReference>
<dbReference type="eggNOG" id="KOG3627">
    <property type="taxonomic scope" value="Eukaryota"/>
</dbReference>
<dbReference type="GeneTree" id="ENSGT00940000159903"/>
<dbReference type="HOGENOM" id="CLU_006842_0_0_1"/>
<dbReference type="InParanoid" id="P06866"/>
<dbReference type="OrthoDB" id="32531at9989"/>
<dbReference type="PhylomeDB" id="P06866"/>
<dbReference type="TreeFam" id="TF334326"/>
<dbReference type="Reactome" id="R-RNO-2168880">
    <property type="pathway name" value="Scavenging of heme from plasma"/>
</dbReference>
<dbReference type="Reactome" id="R-RNO-6798695">
    <property type="pathway name" value="Neutrophil degranulation"/>
</dbReference>
<dbReference type="PRO" id="PR:P06866"/>
<dbReference type="Proteomes" id="UP000002494">
    <property type="component" value="Chromosome 19"/>
</dbReference>
<dbReference type="GO" id="GO:0072562">
    <property type="term" value="C:blood microparticle"/>
    <property type="evidence" value="ECO:0000314"/>
    <property type="project" value="RGD"/>
</dbReference>
<dbReference type="GO" id="GO:0005615">
    <property type="term" value="C:extracellular space"/>
    <property type="evidence" value="ECO:0000314"/>
    <property type="project" value="RGD"/>
</dbReference>
<dbReference type="GO" id="GO:0031838">
    <property type="term" value="C:haptoglobin-hemoglobin complex"/>
    <property type="evidence" value="ECO:0000266"/>
    <property type="project" value="RGD"/>
</dbReference>
<dbReference type="GO" id="GO:0016209">
    <property type="term" value="F:antioxidant activity"/>
    <property type="evidence" value="ECO:0007669"/>
    <property type="project" value="UniProtKB-KW"/>
</dbReference>
<dbReference type="GO" id="GO:0030492">
    <property type="term" value="F:hemoglobin binding"/>
    <property type="evidence" value="ECO:0000314"/>
    <property type="project" value="RGD"/>
</dbReference>
<dbReference type="GO" id="GO:0042802">
    <property type="term" value="F:identical protein binding"/>
    <property type="evidence" value="ECO:0000353"/>
    <property type="project" value="RGD"/>
</dbReference>
<dbReference type="GO" id="GO:0004252">
    <property type="term" value="F:serine-type endopeptidase activity"/>
    <property type="evidence" value="ECO:0000318"/>
    <property type="project" value="GO_Central"/>
</dbReference>
<dbReference type="GO" id="GO:0006953">
    <property type="term" value="P:acute-phase response"/>
    <property type="evidence" value="ECO:0007669"/>
    <property type="project" value="UniProtKB-KW"/>
</dbReference>
<dbReference type="GO" id="GO:0031100">
    <property type="term" value="P:animal organ regeneration"/>
    <property type="evidence" value="ECO:0000270"/>
    <property type="project" value="RGD"/>
</dbReference>
<dbReference type="GO" id="GO:0042742">
    <property type="term" value="P:defense response to bacterium"/>
    <property type="evidence" value="ECO:0007669"/>
    <property type="project" value="UniProtKB-KW"/>
</dbReference>
<dbReference type="GO" id="GO:0002376">
    <property type="term" value="P:immune system process"/>
    <property type="evidence" value="ECO:0007669"/>
    <property type="project" value="UniProtKB-KW"/>
</dbReference>
<dbReference type="GO" id="GO:0001889">
    <property type="term" value="P:liver development"/>
    <property type="evidence" value="ECO:0000314"/>
    <property type="project" value="RGD"/>
</dbReference>
<dbReference type="GO" id="GO:2000296">
    <property type="term" value="P:negative regulation of hydrogen peroxide catabolic process"/>
    <property type="evidence" value="ECO:0000266"/>
    <property type="project" value="RGD"/>
</dbReference>
<dbReference type="GO" id="GO:0007219">
    <property type="term" value="P:Notch signaling pathway"/>
    <property type="evidence" value="ECO:0000266"/>
    <property type="project" value="RGD"/>
</dbReference>
<dbReference type="GO" id="GO:0009617">
    <property type="term" value="P:response to bacterium"/>
    <property type="evidence" value="ECO:0000266"/>
    <property type="project" value="RGD"/>
</dbReference>
<dbReference type="GO" id="GO:0033590">
    <property type="term" value="P:response to cobalamin"/>
    <property type="evidence" value="ECO:0000270"/>
    <property type="project" value="RGD"/>
</dbReference>
<dbReference type="GO" id="GO:1904619">
    <property type="term" value="P:response to dimethyl sulfoxide"/>
    <property type="evidence" value="ECO:0000270"/>
    <property type="project" value="RGD"/>
</dbReference>
<dbReference type="GO" id="GO:0051602">
    <property type="term" value="P:response to electrical stimulus"/>
    <property type="evidence" value="ECO:0000270"/>
    <property type="project" value="RGD"/>
</dbReference>
<dbReference type="GO" id="GO:0051384">
    <property type="term" value="P:response to glucocorticoid"/>
    <property type="evidence" value="ECO:0000270"/>
    <property type="project" value="RGD"/>
</dbReference>
<dbReference type="GO" id="GO:0060416">
    <property type="term" value="P:response to growth hormone"/>
    <property type="evidence" value="ECO:0000270"/>
    <property type="project" value="RGD"/>
</dbReference>
<dbReference type="GO" id="GO:0071503">
    <property type="term" value="P:response to heparin"/>
    <property type="evidence" value="ECO:0000270"/>
    <property type="project" value="RGD"/>
</dbReference>
<dbReference type="GO" id="GO:0042542">
    <property type="term" value="P:response to hydrogen peroxide"/>
    <property type="evidence" value="ECO:0000266"/>
    <property type="project" value="RGD"/>
</dbReference>
<dbReference type="GO" id="GO:0001666">
    <property type="term" value="P:response to hypoxia"/>
    <property type="evidence" value="ECO:0000270"/>
    <property type="project" value="RGD"/>
</dbReference>
<dbReference type="GO" id="GO:0033591">
    <property type="term" value="P:response to L-ascorbic acid"/>
    <property type="evidence" value="ECO:0000270"/>
    <property type="project" value="RGD"/>
</dbReference>
<dbReference type="GO" id="GO:0010288">
    <property type="term" value="P:response to lead ion"/>
    <property type="evidence" value="ECO:0000270"/>
    <property type="project" value="RGD"/>
</dbReference>
<dbReference type="GO" id="GO:0032496">
    <property type="term" value="P:response to lipopolysaccharide"/>
    <property type="evidence" value="ECO:0000270"/>
    <property type="project" value="RGD"/>
</dbReference>
<dbReference type="GO" id="GO:0032026">
    <property type="term" value="P:response to magnesium ion"/>
    <property type="evidence" value="ECO:0000270"/>
    <property type="project" value="RGD"/>
</dbReference>
<dbReference type="GO" id="GO:0042594">
    <property type="term" value="P:response to starvation"/>
    <property type="evidence" value="ECO:0000270"/>
    <property type="project" value="RGD"/>
</dbReference>
<dbReference type="GO" id="GO:0010165">
    <property type="term" value="P:response to X-ray"/>
    <property type="evidence" value="ECO:0000270"/>
    <property type="project" value="RGD"/>
</dbReference>
<dbReference type="GO" id="GO:0009410">
    <property type="term" value="P:response to xenobiotic stimulus"/>
    <property type="evidence" value="ECO:0000270"/>
    <property type="project" value="RGD"/>
</dbReference>
<dbReference type="GO" id="GO:0007283">
    <property type="term" value="P:spermatogenesis"/>
    <property type="evidence" value="ECO:0000270"/>
    <property type="project" value="RGD"/>
</dbReference>
<dbReference type="GO" id="GO:0031638">
    <property type="term" value="P:zymogen activation"/>
    <property type="evidence" value="ECO:0000318"/>
    <property type="project" value="GO_Central"/>
</dbReference>
<dbReference type="CDD" id="cd00033">
    <property type="entry name" value="CCP"/>
    <property type="match status" value="1"/>
</dbReference>
<dbReference type="CDD" id="cd00190">
    <property type="entry name" value="Tryp_SPc"/>
    <property type="match status" value="1"/>
</dbReference>
<dbReference type="FunFam" id="2.10.70.10:FF:000048">
    <property type="entry name" value="Haptoglobin"/>
    <property type="match status" value="1"/>
</dbReference>
<dbReference type="FunFam" id="2.40.10.10:FF:000027">
    <property type="entry name" value="Haptoglobin"/>
    <property type="match status" value="1"/>
</dbReference>
<dbReference type="FunFam" id="2.40.10.10:FF:000031">
    <property type="entry name" value="Haptoglobin"/>
    <property type="match status" value="1"/>
</dbReference>
<dbReference type="Gene3D" id="2.10.70.10">
    <property type="entry name" value="Complement Module, domain 1"/>
    <property type="match status" value="1"/>
</dbReference>
<dbReference type="Gene3D" id="2.40.10.10">
    <property type="entry name" value="Trypsin-like serine proteases"/>
    <property type="match status" value="2"/>
</dbReference>
<dbReference type="InterPro" id="IPR008292">
    <property type="entry name" value="Haptoglobin"/>
</dbReference>
<dbReference type="InterPro" id="IPR009003">
    <property type="entry name" value="Peptidase_S1_PA"/>
</dbReference>
<dbReference type="InterPro" id="IPR043504">
    <property type="entry name" value="Peptidase_S1_PA_chymotrypsin"/>
</dbReference>
<dbReference type="InterPro" id="IPR001314">
    <property type="entry name" value="Peptidase_S1A"/>
</dbReference>
<dbReference type="InterPro" id="IPR035976">
    <property type="entry name" value="Sushi/SCR/CCP_sf"/>
</dbReference>
<dbReference type="InterPro" id="IPR000436">
    <property type="entry name" value="Sushi_SCR_CCP_dom"/>
</dbReference>
<dbReference type="InterPro" id="IPR001254">
    <property type="entry name" value="Trypsin_dom"/>
</dbReference>
<dbReference type="PANTHER" id="PTHR24255">
    <property type="entry name" value="COMPLEMENT COMPONENT 1, S SUBCOMPONENT-RELATED"/>
    <property type="match status" value="1"/>
</dbReference>
<dbReference type="PANTHER" id="PTHR24255:SF27">
    <property type="entry name" value="HAPTOGLOBIN-RELATED PROTEIN"/>
    <property type="match status" value="1"/>
</dbReference>
<dbReference type="Pfam" id="PF00089">
    <property type="entry name" value="Trypsin"/>
    <property type="match status" value="1"/>
</dbReference>
<dbReference type="PIRSF" id="PIRSF001137">
    <property type="entry name" value="Haptoglobin"/>
    <property type="match status" value="1"/>
</dbReference>
<dbReference type="PRINTS" id="PR00722">
    <property type="entry name" value="CHYMOTRYPSIN"/>
</dbReference>
<dbReference type="SMART" id="SM00020">
    <property type="entry name" value="Tryp_SPc"/>
    <property type="match status" value="1"/>
</dbReference>
<dbReference type="SUPFAM" id="SSF57535">
    <property type="entry name" value="Complement control module/SCR domain"/>
    <property type="match status" value="1"/>
</dbReference>
<dbReference type="SUPFAM" id="SSF50494">
    <property type="entry name" value="Trypsin-like serine proteases"/>
    <property type="match status" value="1"/>
</dbReference>
<dbReference type="PROSITE" id="PS50923">
    <property type="entry name" value="SUSHI"/>
    <property type="match status" value="1"/>
</dbReference>
<dbReference type="PROSITE" id="PS50240">
    <property type="entry name" value="TRYPSIN_DOM"/>
    <property type="match status" value="1"/>
</dbReference>
<keyword id="KW-0011">Acute phase</keyword>
<keyword id="KW-0025">Alternative splicing</keyword>
<keyword id="KW-0044">Antibiotic</keyword>
<keyword id="KW-0929">Antimicrobial</keyword>
<keyword id="KW-0049">Antioxidant</keyword>
<keyword id="KW-0903">Direct protein sequencing</keyword>
<keyword id="KW-1015">Disulfide bond</keyword>
<keyword id="KW-0325">Glycoprotein</keyword>
<keyword id="KW-0351">Hemoglobin-binding</keyword>
<keyword id="KW-0391">Immunity</keyword>
<keyword id="KW-1185">Reference proteome</keyword>
<keyword id="KW-0964">Secreted</keyword>
<keyword id="KW-0721">Serine protease homolog</keyword>
<keyword id="KW-0732">Signal</keyword>
<keyword id="KW-0768">Sushi</keyword>
<proteinExistence type="evidence at protein level"/>
<accession>P06866</accession>
<accession>Q5EBB4</accession>
<accession>Q7TP23</accession>
<protein>
    <recommendedName>
        <fullName>Haptoglobin</fullName>
    </recommendedName>
    <alternativeName>
        <fullName>Liver regeneration-related protein LRRG173</fullName>
    </alternativeName>
    <component>
        <recommendedName>
            <fullName>Haptoglobin alpha chain</fullName>
        </recommendedName>
    </component>
    <component>
        <recommendedName>
            <fullName>Haptoglobin beta chain</fullName>
        </recommendedName>
    </component>
</protein>
<name>HPT_RAT</name>
<organism>
    <name type="scientific">Rattus norvegicus</name>
    <name type="common">Rat</name>
    <dbReference type="NCBI Taxonomy" id="10116"/>
    <lineage>
        <taxon>Eukaryota</taxon>
        <taxon>Metazoa</taxon>
        <taxon>Chordata</taxon>
        <taxon>Craniata</taxon>
        <taxon>Vertebrata</taxon>
        <taxon>Euteleostomi</taxon>
        <taxon>Mammalia</taxon>
        <taxon>Eutheria</taxon>
        <taxon>Euarchontoglires</taxon>
        <taxon>Glires</taxon>
        <taxon>Rodentia</taxon>
        <taxon>Myomorpha</taxon>
        <taxon>Muroidea</taxon>
        <taxon>Muridae</taxon>
        <taxon>Murinae</taxon>
        <taxon>Rattus</taxon>
    </lineage>
</organism>
<feature type="signal peptide" evidence="1">
    <location>
        <begin position="1"/>
        <end position="18"/>
    </location>
</feature>
<feature type="chain" id="PRO_0000028483" description="Haptoglobin">
    <location>
        <begin position="19"/>
        <end position="347"/>
    </location>
</feature>
<feature type="chain" id="PRO_0000028484" description="Haptoglobin alpha chain">
    <location>
        <begin position="19"/>
        <end position="101"/>
    </location>
</feature>
<feature type="chain" id="PRO_0000028485" description="Haptoglobin beta chain">
    <location>
        <begin position="103"/>
        <end position="347"/>
    </location>
</feature>
<feature type="domain" description="Sushi" evidence="6">
    <location>
        <begin position="31"/>
        <end position="88"/>
    </location>
</feature>
<feature type="domain" description="Peptidase S1" evidence="5">
    <location>
        <begin position="103"/>
        <end position="345"/>
    </location>
</feature>
<feature type="region of interest" description="Interaction with CD163" evidence="1">
    <location>
        <begin position="259"/>
        <end position="264"/>
    </location>
</feature>
<feature type="glycosylation site" description="N-linked (GlcNAc...) asparagine" evidence="4">
    <location>
        <position position="148"/>
    </location>
</feature>
<feature type="glycosylation site" description="N-linked (GlcNAc...) asparagine" evidence="4">
    <location>
        <position position="152"/>
    </location>
</feature>
<feature type="disulfide bond" description="Interchain" evidence="1">
    <location>
        <position position="33"/>
    </location>
</feature>
<feature type="disulfide bond" evidence="1">
    <location>
        <begin position="52"/>
        <end position="86"/>
    </location>
</feature>
<feature type="disulfide bond" description="Interchain (between alpha and beta chains)" evidence="5 6">
    <location>
        <begin position="90"/>
        <end position="207"/>
    </location>
</feature>
<feature type="disulfide bond" evidence="1">
    <location>
        <begin position="250"/>
        <end position="281"/>
    </location>
</feature>
<feature type="disulfide bond" evidence="1">
    <location>
        <begin position="292"/>
        <end position="322"/>
    </location>
</feature>
<feature type="splice variant" id="VSP_022571" description="In isoform 2." evidence="7">
    <original>V</original>
    <variation>GPTLSKNEMYTAFRSVIDFQRIVECVCVMTITYVL</variation>
    <location>
        <position position="89"/>
    </location>
</feature>
<feature type="sequence conflict" description="In Ref. 5; AA sequence." evidence="8" ref="5">
    <original>A</original>
    <variation>D</variation>
    <location>
        <position position="25"/>
    </location>
</feature>
<feature type="sequence conflict" description="In Ref. 1; AAA41348 and 4; AAA41349." evidence="8" ref="1 4">
    <original>S</original>
    <variation>T</variation>
    <location>
        <position position="267"/>
    </location>
</feature>
<feature type="sequence conflict" description="In Ref. 1; AAA41348." evidence="8" ref="1">
    <original>R</original>
    <variation>K</variation>
    <location>
        <position position="332"/>
    </location>
</feature>
<evidence type="ECO:0000250" key="1"/>
<evidence type="ECO:0000250" key="2">
    <source>
        <dbReference type="UniProtKB" id="P00738"/>
    </source>
</evidence>
<evidence type="ECO:0000250" key="3">
    <source>
        <dbReference type="UniProtKB" id="Q8SPS7"/>
    </source>
</evidence>
<evidence type="ECO:0000255" key="4"/>
<evidence type="ECO:0000255" key="5">
    <source>
        <dbReference type="PROSITE-ProRule" id="PRU00274"/>
    </source>
</evidence>
<evidence type="ECO:0000255" key="6">
    <source>
        <dbReference type="PROSITE-ProRule" id="PRU00302"/>
    </source>
</evidence>
<evidence type="ECO:0000303" key="7">
    <source ref="2"/>
</evidence>
<evidence type="ECO:0000305" key="8"/>